<accession>A3D7K1</accession>
<comment type="function">
    <text evidence="1">Involved in mRNA degradation. Catalyzes the phosphorolysis of single-stranded polyribonucleotides processively in the 3'- to 5'-direction.</text>
</comment>
<comment type="catalytic activity">
    <reaction evidence="1">
        <text>RNA(n+1) + phosphate = RNA(n) + a ribonucleoside 5'-diphosphate</text>
        <dbReference type="Rhea" id="RHEA:22096"/>
        <dbReference type="Rhea" id="RHEA-COMP:14527"/>
        <dbReference type="Rhea" id="RHEA-COMP:17342"/>
        <dbReference type="ChEBI" id="CHEBI:43474"/>
        <dbReference type="ChEBI" id="CHEBI:57930"/>
        <dbReference type="ChEBI" id="CHEBI:140395"/>
        <dbReference type="EC" id="2.7.7.8"/>
    </reaction>
</comment>
<comment type="cofactor">
    <cofactor evidence="1">
        <name>Mg(2+)</name>
        <dbReference type="ChEBI" id="CHEBI:18420"/>
    </cofactor>
</comment>
<comment type="subunit">
    <text evidence="1">Component of the RNA degradosome, which is a multiprotein complex involved in RNA processing and mRNA degradation.</text>
</comment>
<comment type="subcellular location">
    <subcellularLocation>
        <location evidence="1">Cytoplasm</location>
    </subcellularLocation>
</comment>
<comment type="similarity">
    <text evidence="1">Belongs to the polyribonucleotide nucleotidyltransferase family.</text>
</comment>
<comment type="sequence caution" evidence="2">
    <conflict type="erroneous initiation">
        <sequence resource="EMBL-CDS" id="ABN62714"/>
    </conflict>
</comment>
<sequence>MNPIVKSFEYGQHTVTLETGVIARQADAAVLASMGDTTVLVTVVGKKEADAGRDFFPLTVNYQEKTYAAGKIPGGFFKREGRPSEDETLIARLIDRPIRPLFPNGFKNEVQVIITVVSVDPQIEPDIISMIGTSAALAISGIPFSGPLGAARVGYIDGEYVLNPSVAQLATSQLNLVVAGTAGAVLMVESEAQALPEEVMLGSVVYGHDQQQVVIKAIAEFKAEAGKPTWDWTAPTQDADLVAQIKELAEAGLGDAYKIQVKQDRYAQVSVVKAATKEALLASNPSIDLREVDNLLGSLEKKVVRGRIIRGEPRIDGREPDMIRALSVLAGVLPRTHGSALFTRGETQALVTCTLGTERDAQKIDSIMGERTNRFMLHYNFPPYSVGETGMVGSPKRREIGHGKLAWRGINAVMPSAAEFPYSVRVVSEITESNGSSSMASVCGTSLALMDAGVPIKTSVAGIAMGLVKEGDDFVVLSDILGDEDHLGDMDFKVAGTRDGITALQMDIKIEGITKEIMDIALQQAYGARVHILNVMDQAIGSHRDDISDHAPRITVIKINPEKIRDVIGKGGAVIRALTEETGTTIELEDDGTVKIASSNGEATKEAIRRIEEITSEVEVGRIYNGKVIRIVDFGAFVNILPGKDGLVHISQISDERVANVSDHLELNQEVAVKVMEVDRQGRVRLSIKEAQTKETAAAE</sequence>
<organism>
    <name type="scientific">Shewanella baltica (strain OS155 / ATCC BAA-1091)</name>
    <dbReference type="NCBI Taxonomy" id="325240"/>
    <lineage>
        <taxon>Bacteria</taxon>
        <taxon>Pseudomonadati</taxon>
        <taxon>Pseudomonadota</taxon>
        <taxon>Gammaproteobacteria</taxon>
        <taxon>Alteromonadales</taxon>
        <taxon>Shewanellaceae</taxon>
        <taxon>Shewanella</taxon>
    </lineage>
</organism>
<proteinExistence type="inferred from homology"/>
<protein>
    <recommendedName>
        <fullName evidence="1">Polyribonucleotide nucleotidyltransferase</fullName>
        <ecNumber evidence="1">2.7.7.8</ecNumber>
    </recommendedName>
    <alternativeName>
        <fullName evidence="1">Polynucleotide phosphorylase</fullName>
        <shortName evidence="1">PNPase</shortName>
    </alternativeName>
</protein>
<reference key="1">
    <citation type="submission" date="2007-02" db="EMBL/GenBank/DDBJ databases">
        <title>Complete sequence of chromosome of Shewanella baltica OS155.</title>
        <authorList>
            <consortium name="US DOE Joint Genome Institute"/>
            <person name="Copeland A."/>
            <person name="Lucas S."/>
            <person name="Lapidus A."/>
            <person name="Barry K."/>
            <person name="Detter J.C."/>
            <person name="Glavina del Rio T."/>
            <person name="Hammon N."/>
            <person name="Israni S."/>
            <person name="Dalin E."/>
            <person name="Tice H."/>
            <person name="Pitluck S."/>
            <person name="Sims D.R."/>
            <person name="Brettin T."/>
            <person name="Bruce D."/>
            <person name="Han C."/>
            <person name="Tapia R."/>
            <person name="Brainard J."/>
            <person name="Schmutz J."/>
            <person name="Larimer F."/>
            <person name="Land M."/>
            <person name="Hauser L."/>
            <person name="Kyrpides N."/>
            <person name="Mikhailova N."/>
            <person name="Brettar I."/>
            <person name="Klappenbach J."/>
            <person name="Konstantinidis K."/>
            <person name="Rodrigues J."/>
            <person name="Tiedje J."/>
            <person name="Richardson P."/>
        </authorList>
    </citation>
    <scope>NUCLEOTIDE SEQUENCE [LARGE SCALE GENOMIC DNA]</scope>
    <source>
        <strain>OS155 / ATCC BAA-1091</strain>
    </source>
</reference>
<gene>
    <name evidence="1" type="primary">pnp</name>
    <name type="ordered locus">Sbal_3234</name>
</gene>
<feature type="chain" id="PRO_0000329837" description="Polyribonucleotide nucleotidyltransferase">
    <location>
        <begin position="1"/>
        <end position="700"/>
    </location>
</feature>
<feature type="domain" description="KH" evidence="1">
    <location>
        <begin position="552"/>
        <end position="611"/>
    </location>
</feature>
<feature type="domain" description="S1 motif" evidence="1">
    <location>
        <begin position="621"/>
        <end position="689"/>
    </location>
</feature>
<feature type="binding site" evidence="1">
    <location>
        <position position="485"/>
    </location>
    <ligand>
        <name>Mg(2+)</name>
        <dbReference type="ChEBI" id="CHEBI:18420"/>
    </ligand>
</feature>
<feature type="binding site" evidence="1">
    <location>
        <position position="491"/>
    </location>
    <ligand>
        <name>Mg(2+)</name>
        <dbReference type="ChEBI" id="CHEBI:18420"/>
    </ligand>
</feature>
<name>PNP_SHEB5</name>
<keyword id="KW-0963">Cytoplasm</keyword>
<keyword id="KW-0460">Magnesium</keyword>
<keyword id="KW-0479">Metal-binding</keyword>
<keyword id="KW-0548">Nucleotidyltransferase</keyword>
<keyword id="KW-1185">Reference proteome</keyword>
<keyword id="KW-0694">RNA-binding</keyword>
<keyword id="KW-0808">Transferase</keyword>
<evidence type="ECO:0000255" key="1">
    <source>
        <dbReference type="HAMAP-Rule" id="MF_01595"/>
    </source>
</evidence>
<evidence type="ECO:0000305" key="2"/>
<dbReference type="EC" id="2.7.7.8" evidence="1"/>
<dbReference type="EMBL" id="CP000563">
    <property type="protein sequence ID" value="ABN62714.1"/>
    <property type="status" value="ALT_INIT"/>
    <property type="molecule type" value="Genomic_DNA"/>
</dbReference>
<dbReference type="RefSeq" id="WP_006082711.1">
    <property type="nucleotide sequence ID" value="NC_009052.1"/>
</dbReference>
<dbReference type="SMR" id="A3D7K1"/>
<dbReference type="STRING" id="325240.Sbal_3234"/>
<dbReference type="GeneID" id="11773454"/>
<dbReference type="KEGG" id="sbl:Sbal_3234"/>
<dbReference type="HOGENOM" id="CLU_004217_2_2_6"/>
<dbReference type="OrthoDB" id="9804305at2"/>
<dbReference type="Proteomes" id="UP000001557">
    <property type="component" value="Chromosome"/>
</dbReference>
<dbReference type="GO" id="GO:0005829">
    <property type="term" value="C:cytosol"/>
    <property type="evidence" value="ECO:0007669"/>
    <property type="project" value="TreeGrafter"/>
</dbReference>
<dbReference type="GO" id="GO:0000175">
    <property type="term" value="F:3'-5'-RNA exonuclease activity"/>
    <property type="evidence" value="ECO:0007669"/>
    <property type="project" value="TreeGrafter"/>
</dbReference>
<dbReference type="GO" id="GO:0000287">
    <property type="term" value="F:magnesium ion binding"/>
    <property type="evidence" value="ECO:0007669"/>
    <property type="project" value="UniProtKB-UniRule"/>
</dbReference>
<dbReference type="GO" id="GO:0004654">
    <property type="term" value="F:polyribonucleotide nucleotidyltransferase activity"/>
    <property type="evidence" value="ECO:0007669"/>
    <property type="project" value="UniProtKB-UniRule"/>
</dbReference>
<dbReference type="GO" id="GO:0003723">
    <property type="term" value="F:RNA binding"/>
    <property type="evidence" value="ECO:0007669"/>
    <property type="project" value="UniProtKB-UniRule"/>
</dbReference>
<dbReference type="GO" id="GO:0006402">
    <property type="term" value="P:mRNA catabolic process"/>
    <property type="evidence" value="ECO:0007669"/>
    <property type="project" value="UniProtKB-UniRule"/>
</dbReference>
<dbReference type="GO" id="GO:0006396">
    <property type="term" value="P:RNA processing"/>
    <property type="evidence" value="ECO:0007669"/>
    <property type="project" value="InterPro"/>
</dbReference>
<dbReference type="CDD" id="cd02393">
    <property type="entry name" value="KH-I_PNPase"/>
    <property type="match status" value="1"/>
</dbReference>
<dbReference type="CDD" id="cd11363">
    <property type="entry name" value="RNase_PH_PNPase_1"/>
    <property type="match status" value="1"/>
</dbReference>
<dbReference type="CDD" id="cd11364">
    <property type="entry name" value="RNase_PH_PNPase_2"/>
    <property type="match status" value="1"/>
</dbReference>
<dbReference type="CDD" id="cd04472">
    <property type="entry name" value="S1_PNPase"/>
    <property type="match status" value="1"/>
</dbReference>
<dbReference type="FunFam" id="2.40.50.140:FF:000023">
    <property type="entry name" value="Polyribonucleotide nucleotidyltransferase"/>
    <property type="match status" value="1"/>
</dbReference>
<dbReference type="FunFam" id="3.30.1370.10:FF:000001">
    <property type="entry name" value="Polyribonucleotide nucleotidyltransferase"/>
    <property type="match status" value="1"/>
</dbReference>
<dbReference type="FunFam" id="3.30.230.70:FF:000001">
    <property type="entry name" value="Polyribonucleotide nucleotidyltransferase"/>
    <property type="match status" value="1"/>
</dbReference>
<dbReference type="FunFam" id="3.30.230.70:FF:000002">
    <property type="entry name" value="Polyribonucleotide nucleotidyltransferase"/>
    <property type="match status" value="1"/>
</dbReference>
<dbReference type="Gene3D" id="3.30.230.70">
    <property type="entry name" value="GHMP Kinase, N-terminal domain"/>
    <property type="match status" value="2"/>
</dbReference>
<dbReference type="Gene3D" id="3.30.1370.10">
    <property type="entry name" value="K Homology domain, type 1"/>
    <property type="match status" value="1"/>
</dbReference>
<dbReference type="Gene3D" id="2.40.50.140">
    <property type="entry name" value="Nucleic acid-binding proteins"/>
    <property type="match status" value="1"/>
</dbReference>
<dbReference type="HAMAP" id="MF_01595">
    <property type="entry name" value="PNPase"/>
    <property type="match status" value="1"/>
</dbReference>
<dbReference type="InterPro" id="IPR001247">
    <property type="entry name" value="ExoRNase_PH_dom1"/>
</dbReference>
<dbReference type="InterPro" id="IPR015847">
    <property type="entry name" value="ExoRNase_PH_dom2"/>
</dbReference>
<dbReference type="InterPro" id="IPR036345">
    <property type="entry name" value="ExoRNase_PH_dom2_sf"/>
</dbReference>
<dbReference type="InterPro" id="IPR004087">
    <property type="entry name" value="KH_dom"/>
</dbReference>
<dbReference type="InterPro" id="IPR004088">
    <property type="entry name" value="KH_dom_type_1"/>
</dbReference>
<dbReference type="InterPro" id="IPR036612">
    <property type="entry name" value="KH_dom_type_1_sf"/>
</dbReference>
<dbReference type="InterPro" id="IPR012340">
    <property type="entry name" value="NA-bd_OB-fold"/>
</dbReference>
<dbReference type="InterPro" id="IPR012162">
    <property type="entry name" value="PNPase"/>
</dbReference>
<dbReference type="InterPro" id="IPR027408">
    <property type="entry name" value="PNPase/RNase_PH_dom_sf"/>
</dbReference>
<dbReference type="InterPro" id="IPR015848">
    <property type="entry name" value="PNPase_PH_RNA-bd_bac/org-type"/>
</dbReference>
<dbReference type="InterPro" id="IPR036456">
    <property type="entry name" value="PNPase_PH_RNA-bd_sf"/>
</dbReference>
<dbReference type="InterPro" id="IPR020568">
    <property type="entry name" value="Ribosomal_Su5_D2-typ_SF"/>
</dbReference>
<dbReference type="InterPro" id="IPR003029">
    <property type="entry name" value="S1_domain"/>
</dbReference>
<dbReference type="NCBIfam" id="TIGR03591">
    <property type="entry name" value="polynuc_phos"/>
    <property type="match status" value="1"/>
</dbReference>
<dbReference type="NCBIfam" id="NF008805">
    <property type="entry name" value="PRK11824.1"/>
    <property type="match status" value="1"/>
</dbReference>
<dbReference type="PANTHER" id="PTHR11252">
    <property type="entry name" value="POLYRIBONUCLEOTIDE NUCLEOTIDYLTRANSFERASE"/>
    <property type="match status" value="1"/>
</dbReference>
<dbReference type="PANTHER" id="PTHR11252:SF0">
    <property type="entry name" value="POLYRIBONUCLEOTIDE NUCLEOTIDYLTRANSFERASE 1, MITOCHONDRIAL"/>
    <property type="match status" value="1"/>
</dbReference>
<dbReference type="Pfam" id="PF00013">
    <property type="entry name" value="KH_1"/>
    <property type="match status" value="1"/>
</dbReference>
<dbReference type="Pfam" id="PF03726">
    <property type="entry name" value="PNPase"/>
    <property type="match status" value="1"/>
</dbReference>
<dbReference type="Pfam" id="PF01138">
    <property type="entry name" value="RNase_PH"/>
    <property type="match status" value="2"/>
</dbReference>
<dbReference type="Pfam" id="PF03725">
    <property type="entry name" value="RNase_PH_C"/>
    <property type="match status" value="2"/>
</dbReference>
<dbReference type="Pfam" id="PF00575">
    <property type="entry name" value="S1"/>
    <property type="match status" value="1"/>
</dbReference>
<dbReference type="PIRSF" id="PIRSF005499">
    <property type="entry name" value="PNPase"/>
    <property type="match status" value="1"/>
</dbReference>
<dbReference type="SMART" id="SM00322">
    <property type="entry name" value="KH"/>
    <property type="match status" value="1"/>
</dbReference>
<dbReference type="SMART" id="SM00316">
    <property type="entry name" value="S1"/>
    <property type="match status" value="1"/>
</dbReference>
<dbReference type="SUPFAM" id="SSF54791">
    <property type="entry name" value="Eukaryotic type KH-domain (KH-domain type I)"/>
    <property type="match status" value="1"/>
</dbReference>
<dbReference type="SUPFAM" id="SSF50249">
    <property type="entry name" value="Nucleic acid-binding proteins"/>
    <property type="match status" value="1"/>
</dbReference>
<dbReference type="SUPFAM" id="SSF46915">
    <property type="entry name" value="Polynucleotide phosphorylase/guanosine pentaphosphate synthase (PNPase/GPSI), domain 3"/>
    <property type="match status" value="1"/>
</dbReference>
<dbReference type="SUPFAM" id="SSF55666">
    <property type="entry name" value="Ribonuclease PH domain 2-like"/>
    <property type="match status" value="2"/>
</dbReference>
<dbReference type="SUPFAM" id="SSF54211">
    <property type="entry name" value="Ribosomal protein S5 domain 2-like"/>
    <property type="match status" value="2"/>
</dbReference>
<dbReference type="PROSITE" id="PS50084">
    <property type="entry name" value="KH_TYPE_1"/>
    <property type="match status" value="1"/>
</dbReference>
<dbReference type="PROSITE" id="PS50126">
    <property type="entry name" value="S1"/>
    <property type="match status" value="1"/>
</dbReference>